<feature type="chain" id="PRO_0000277207" description="Large ribosomal subunit protein uL13c">
    <location>
        <begin position="1"/>
        <end position="143"/>
    </location>
</feature>
<sequence>MNKTYLAPTKNYSTWYIIDAKNKNLGRLSSKIAKLLRGKNSISFTPYVNNKIYIILINSRSINVTGKKFVQKTYKRHSGYPGGLKVQKFNEILNQRPNRILEKSIKGMLPKGILGRQLFRQLKIYPDNIHPHESQQPKIITFI</sequence>
<proteinExistence type="inferred from homology"/>
<reference key="1">
    <citation type="journal article" date="2004" name="J. Mol. Evol.">
        <title>Comparative analysis of the complete plastid genome sequence of the red alga Gracilaria tenuistipitata var. liui provides insights into the evolution of rhodoplasts and their relationship to other plastids.</title>
        <authorList>
            <person name="Hagopian J.C."/>
            <person name="Reis M."/>
            <person name="Kitajima J.P."/>
            <person name="Bhattacharya D."/>
            <person name="de Oliveira M.C."/>
        </authorList>
    </citation>
    <scope>NUCLEOTIDE SEQUENCE [LARGE SCALE GENOMIC DNA]</scope>
</reference>
<evidence type="ECO:0000255" key="1">
    <source>
        <dbReference type="HAMAP-Rule" id="MF_01366"/>
    </source>
</evidence>
<evidence type="ECO:0000305" key="2"/>
<dbReference type="EMBL" id="AY673996">
    <property type="protein sequence ID" value="AAT79660.1"/>
    <property type="molecule type" value="Genomic_DNA"/>
</dbReference>
<dbReference type="RefSeq" id="YP_063585.1">
    <property type="nucleotide sequence ID" value="NC_006137.1"/>
</dbReference>
<dbReference type="SMR" id="Q6B8X5"/>
<dbReference type="GeneID" id="2943932"/>
<dbReference type="GO" id="GO:0009507">
    <property type="term" value="C:chloroplast"/>
    <property type="evidence" value="ECO:0007669"/>
    <property type="project" value="UniProtKB-SubCell"/>
</dbReference>
<dbReference type="GO" id="GO:1990904">
    <property type="term" value="C:ribonucleoprotein complex"/>
    <property type="evidence" value="ECO:0007669"/>
    <property type="project" value="UniProtKB-KW"/>
</dbReference>
<dbReference type="GO" id="GO:0005840">
    <property type="term" value="C:ribosome"/>
    <property type="evidence" value="ECO:0007669"/>
    <property type="project" value="UniProtKB-KW"/>
</dbReference>
<dbReference type="GO" id="GO:0003729">
    <property type="term" value="F:mRNA binding"/>
    <property type="evidence" value="ECO:0007669"/>
    <property type="project" value="TreeGrafter"/>
</dbReference>
<dbReference type="GO" id="GO:0003735">
    <property type="term" value="F:structural constituent of ribosome"/>
    <property type="evidence" value="ECO:0007669"/>
    <property type="project" value="InterPro"/>
</dbReference>
<dbReference type="GO" id="GO:0017148">
    <property type="term" value="P:negative regulation of translation"/>
    <property type="evidence" value="ECO:0007669"/>
    <property type="project" value="TreeGrafter"/>
</dbReference>
<dbReference type="GO" id="GO:0006412">
    <property type="term" value="P:translation"/>
    <property type="evidence" value="ECO:0007669"/>
    <property type="project" value="UniProtKB-UniRule"/>
</dbReference>
<dbReference type="CDD" id="cd00392">
    <property type="entry name" value="Ribosomal_L13"/>
    <property type="match status" value="1"/>
</dbReference>
<dbReference type="Gene3D" id="3.90.1180.10">
    <property type="entry name" value="Ribosomal protein L13"/>
    <property type="match status" value="1"/>
</dbReference>
<dbReference type="HAMAP" id="MF_01366">
    <property type="entry name" value="Ribosomal_uL13"/>
    <property type="match status" value="1"/>
</dbReference>
<dbReference type="InterPro" id="IPR005822">
    <property type="entry name" value="Ribosomal_uL13"/>
</dbReference>
<dbReference type="InterPro" id="IPR005823">
    <property type="entry name" value="Ribosomal_uL13_bac-type"/>
</dbReference>
<dbReference type="InterPro" id="IPR023563">
    <property type="entry name" value="Ribosomal_uL13_CS"/>
</dbReference>
<dbReference type="InterPro" id="IPR036899">
    <property type="entry name" value="Ribosomal_uL13_sf"/>
</dbReference>
<dbReference type="NCBIfam" id="TIGR01066">
    <property type="entry name" value="rplM_bact"/>
    <property type="match status" value="1"/>
</dbReference>
<dbReference type="PANTHER" id="PTHR11545:SF2">
    <property type="entry name" value="LARGE RIBOSOMAL SUBUNIT PROTEIN UL13M"/>
    <property type="match status" value="1"/>
</dbReference>
<dbReference type="PANTHER" id="PTHR11545">
    <property type="entry name" value="RIBOSOMAL PROTEIN L13"/>
    <property type="match status" value="1"/>
</dbReference>
<dbReference type="Pfam" id="PF00572">
    <property type="entry name" value="Ribosomal_L13"/>
    <property type="match status" value="1"/>
</dbReference>
<dbReference type="PIRSF" id="PIRSF002181">
    <property type="entry name" value="Ribosomal_L13"/>
    <property type="match status" value="1"/>
</dbReference>
<dbReference type="SUPFAM" id="SSF52161">
    <property type="entry name" value="Ribosomal protein L13"/>
    <property type="match status" value="1"/>
</dbReference>
<dbReference type="PROSITE" id="PS00783">
    <property type="entry name" value="RIBOSOMAL_L13"/>
    <property type="match status" value="1"/>
</dbReference>
<comment type="subunit">
    <text evidence="1">Part of the 50S ribosomal subunit.</text>
</comment>
<comment type="subcellular location">
    <subcellularLocation>
        <location>Plastid</location>
        <location>Chloroplast</location>
    </subcellularLocation>
</comment>
<comment type="similarity">
    <text evidence="1">Belongs to the universal ribosomal protein uL13 family.</text>
</comment>
<accession>Q6B8X5</accession>
<organism>
    <name type="scientific">Gracilaria tenuistipitata var. liui</name>
    <name type="common">Red alga</name>
    <dbReference type="NCBI Taxonomy" id="285951"/>
    <lineage>
        <taxon>Eukaryota</taxon>
        <taxon>Rhodophyta</taxon>
        <taxon>Florideophyceae</taxon>
        <taxon>Rhodymeniophycidae</taxon>
        <taxon>Gracilariales</taxon>
        <taxon>Gracilariaceae</taxon>
        <taxon>Gracilaria</taxon>
        <taxon>Gracilaria tenuistipitata</taxon>
    </lineage>
</organism>
<keyword id="KW-0150">Chloroplast</keyword>
<keyword id="KW-0934">Plastid</keyword>
<keyword id="KW-0687">Ribonucleoprotein</keyword>
<keyword id="KW-0689">Ribosomal protein</keyword>
<name>RK13_GRATL</name>
<protein>
    <recommendedName>
        <fullName evidence="1">Large ribosomal subunit protein uL13c</fullName>
    </recommendedName>
    <alternativeName>
        <fullName evidence="2">50S ribosomal protein L13, chloroplastic</fullName>
    </alternativeName>
</protein>
<geneLocation type="chloroplast"/>
<gene>
    <name evidence="1" type="primary">rpl13</name>
    <name type="ordered locus">Grc000079</name>
</gene>